<sequence length="268" mass="28152">MTIKVGVTGVCGRMGRMLVEATHKAQGCMLGAASEYPGHTLIGADAGELAGVGKLGVLVGGDAETTFRDADVVIDFSVVEATLAHLRLALAQGTPIVIGTTGFSAAERQQIALAAERIPVVFAPNYAVGVNLLFKIAAEVAAVLGGEYDIEIVEAHHRHKVDAPSGTALGLGQAIAEAVERNLDEVAIYGRQGQTGARDPQTIGFSTIRGGDVVGDHTAMFMTDGERLELTHRASSRMTFAKGAVRAAKWVVEQKPGLYDMRDILGFK</sequence>
<proteinExistence type="inferred from homology"/>
<protein>
    <recommendedName>
        <fullName evidence="1">4-hydroxy-tetrahydrodipicolinate reductase</fullName>
        <shortName evidence="1">HTPA reductase</shortName>
        <ecNumber evidence="1">1.17.1.8</ecNumber>
    </recommendedName>
</protein>
<name>DAPB_MAGMM</name>
<evidence type="ECO:0000255" key="1">
    <source>
        <dbReference type="HAMAP-Rule" id="MF_00102"/>
    </source>
</evidence>
<evidence type="ECO:0000305" key="2"/>
<organism>
    <name type="scientific">Magnetococcus marinus (strain ATCC BAA-1437 / JCM 17883 / MC-1)</name>
    <dbReference type="NCBI Taxonomy" id="156889"/>
    <lineage>
        <taxon>Bacteria</taxon>
        <taxon>Pseudomonadati</taxon>
        <taxon>Pseudomonadota</taxon>
        <taxon>Alphaproteobacteria</taxon>
        <taxon>Magnetococcales</taxon>
        <taxon>Magnetococcaceae</taxon>
        <taxon>Magnetococcus</taxon>
    </lineage>
</organism>
<dbReference type="EC" id="1.17.1.8" evidence="1"/>
<dbReference type="EMBL" id="CP000471">
    <property type="protein sequence ID" value="ABK43037.1"/>
    <property type="molecule type" value="Genomic_DNA"/>
</dbReference>
<dbReference type="RefSeq" id="WP_011712204.1">
    <property type="nucleotide sequence ID" value="NC_008576.1"/>
</dbReference>
<dbReference type="SMR" id="A0L4Z4"/>
<dbReference type="STRING" id="156889.Mmc1_0512"/>
<dbReference type="KEGG" id="mgm:Mmc1_0512"/>
<dbReference type="eggNOG" id="COG0289">
    <property type="taxonomic scope" value="Bacteria"/>
</dbReference>
<dbReference type="HOGENOM" id="CLU_047479_2_1_5"/>
<dbReference type="OrthoDB" id="9790352at2"/>
<dbReference type="UniPathway" id="UPA00034">
    <property type="reaction ID" value="UER00018"/>
</dbReference>
<dbReference type="Proteomes" id="UP000002586">
    <property type="component" value="Chromosome"/>
</dbReference>
<dbReference type="GO" id="GO:0005829">
    <property type="term" value="C:cytosol"/>
    <property type="evidence" value="ECO:0007669"/>
    <property type="project" value="TreeGrafter"/>
</dbReference>
<dbReference type="GO" id="GO:0008839">
    <property type="term" value="F:4-hydroxy-tetrahydrodipicolinate reductase"/>
    <property type="evidence" value="ECO:0007669"/>
    <property type="project" value="UniProtKB-EC"/>
</dbReference>
<dbReference type="GO" id="GO:0051287">
    <property type="term" value="F:NAD binding"/>
    <property type="evidence" value="ECO:0007669"/>
    <property type="project" value="UniProtKB-UniRule"/>
</dbReference>
<dbReference type="GO" id="GO:0050661">
    <property type="term" value="F:NADP binding"/>
    <property type="evidence" value="ECO:0007669"/>
    <property type="project" value="UniProtKB-UniRule"/>
</dbReference>
<dbReference type="GO" id="GO:0016726">
    <property type="term" value="F:oxidoreductase activity, acting on CH or CH2 groups, NAD or NADP as acceptor"/>
    <property type="evidence" value="ECO:0007669"/>
    <property type="project" value="UniProtKB-UniRule"/>
</dbReference>
<dbReference type="GO" id="GO:0019877">
    <property type="term" value="P:diaminopimelate biosynthetic process"/>
    <property type="evidence" value="ECO:0007669"/>
    <property type="project" value="UniProtKB-UniRule"/>
</dbReference>
<dbReference type="GO" id="GO:0009089">
    <property type="term" value="P:lysine biosynthetic process via diaminopimelate"/>
    <property type="evidence" value="ECO:0007669"/>
    <property type="project" value="UniProtKB-UniRule"/>
</dbReference>
<dbReference type="CDD" id="cd02274">
    <property type="entry name" value="DHDPR_N"/>
    <property type="match status" value="1"/>
</dbReference>
<dbReference type="FunFam" id="3.30.360.10:FF:000004">
    <property type="entry name" value="4-hydroxy-tetrahydrodipicolinate reductase"/>
    <property type="match status" value="1"/>
</dbReference>
<dbReference type="Gene3D" id="3.30.360.10">
    <property type="entry name" value="Dihydrodipicolinate Reductase, domain 2"/>
    <property type="match status" value="1"/>
</dbReference>
<dbReference type="Gene3D" id="3.40.50.720">
    <property type="entry name" value="NAD(P)-binding Rossmann-like Domain"/>
    <property type="match status" value="1"/>
</dbReference>
<dbReference type="HAMAP" id="MF_00102">
    <property type="entry name" value="DapB"/>
    <property type="match status" value="1"/>
</dbReference>
<dbReference type="InterPro" id="IPR022663">
    <property type="entry name" value="DapB_C"/>
</dbReference>
<dbReference type="InterPro" id="IPR000846">
    <property type="entry name" value="DapB_N"/>
</dbReference>
<dbReference type="InterPro" id="IPR022664">
    <property type="entry name" value="DapB_N_CS"/>
</dbReference>
<dbReference type="InterPro" id="IPR023940">
    <property type="entry name" value="DHDPR_bac"/>
</dbReference>
<dbReference type="InterPro" id="IPR036291">
    <property type="entry name" value="NAD(P)-bd_dom_sf"/>
</dbReference>
<dbReference type="NCBIfam" id="TIGR00036">
    <property type="entry name" value="dapB"/>
    <property type="match status" value="1"/>
</dbReference>
<dbReference type="PANTHER" id="PTHR20836:SF0">
    <property type="entry name" value="4-HYDROXY-TETRAHYDRODIPICOLINATE REDUCTASE 1, CHLOROPLASTIC-RELATED"/>
    <property type="match status" value="1"/>
</dbReference>
<dbReference type="PANTHER" id="PTHR20836">
    <property type="entry name" value="DIHYDRODIPICOLINATE REDUCTASE"/>
    <property type="match status" value="1"/>
</dbReference>
<dbReference type="Pfam" id="PF05173">
    <property type="entry name" value="DapB_C"/>
    <property type="match status" value="1"/>
</dbReference>
<dbReference type="Pfam" id="PF01113">
    <property type="entry name" value="DapB_N"/>
    <property type="match status" value="1"/>
</dbReference>
<dbReference type="PIRSF" id="PIRSF000161">
    <property type="entry name" value="DHPR"/>
    <property type="match status" value="1"/>
</dbReference>
<dbReference type="SUPFAM" id="SSF55347">
    <property type="entry name" value="Glyceraldehyde-3-phosphate dehydrogenase-like, C-terminal domain"/>
    <property type="match status" value="1"/>
</dbReference>
<dbReference type="SUPFAM" id="SSF51735">
    <property type="entry name" value="NAD(P)-binding Rossmann-fold domains"/>
    <property type="match status" value="1"/>
</dbReference>
<dbReference type="PROSITE" id="PS01298">
    <property type="entry name" value="DAPB"/>
    <property type="match status" value="1"/>
</dbReference>
<comment type="function">
    <text evidence="1">Catalyzes the conversion of 4-hydroxy-tetrahydrodipicolinate (HTPA) to tetrahydrodipicolinate.</text>
</comment>
<comment type="catalytic activity">
    <reaction evidence="1">
        <text>(S)-2,3,4,5-tetrahydrodipicolinate + NAD(+) + H2O = (2S,4S)-4-hydroxy-2,3,4,5-tetrahydrodipicolinate + NADH + H(+)</text>
        <dbReference type="Rhea" id="RHEA:35323"/>
        <dbReference type="ChEBI" id="CHEBI:15377"/>
        <dbReference type="ChEBI" id="CHEBI:15378"/>
        <dbReference type="ChEBI" id="CHEBI:16845"/>
        <dbReference type="ChEBI" id="CHEBI:57540"/>
        <dbReference type="ChEBI" id="CHEBI:57945"/>
        <dbReference type="ChEBI" id="CHEBI:67139"/>
        <dbReference type="EC" id="1.17.1.8"/>
    </reaction>
</comment>
<comment type="catalytic activity">
    <reaction evidence="1">
        <text>(S)-2,3,4,5-tetrahydrodipicolinate + NADP(+) + H2O = (2S,4S)-4-hydroxy-2,3,4,5-tetrahydrodipicolinate + NADPH + H(+)</text>
        <dbReference type="Rhea" id="RHEA:35331"/>
        <dbReference type="ChEBI" id="CHEBI:15377"/>
        <dbReference type="ChEBI" id="CHEBI:15378"/>
        <dbReference type="ChEBI" id="CHEBI:16845"/>
        <dbReference type="ChEBI" id="CHEBI:57783"/>
        <dbReference type="ChEBI" id="CHEBI:58349"/>
        <dbReference type="ChEBI" id="CHEBI:67139"/>
        <dbReference type="EC" id="1.17.1.8"/>
    </reaction>
</comment>
<comment type="pathway">
    <text evidence="1">Amino-acid biosynthesis; L-lysine biosynthesis via DAP pathway; (S)-tetrahydrodipicolinate from L-aspartate: step 4/4.</text>
</comment>
<comment type="subcellular location">
    <subcellularLocation>
        <location evidence="1">Cytoplasm</location>
    </subcellularLocation>
</comment>
<comment type="similarity">
    <text evidence="1">Belongs to the DapB family.</text>
</comment>
<comment type="caution">
    <text evidence="2">Was originally thought to be a dihydrodipicolinate reductase (DHDPR), catalyzing the conversion of dihydrodipicolinate to tetrahydrodipicolinate. However, it was shown in E.coli that the substrate of the enzymatic reaction is not dihydrodipicolinate (DHDP) but in fact (2S,4S)-4-hydroxy-2,3,4,5-tetrahydrodipicolinic acid (HTPA), the product released by the DapA-catalyzed reaction.</text>
</comment>
<gene>
    <name evidence="1" type="primary">dapB</name>
    <name type="ordered locus">Mmc1_0512</name>
</gene>
<keyword id="KW-0028">Amino-acid biosynthesis</keyword>
<keyword id="KW-0963">Cytoplasm</keyword>
<keyword id="KW-0220">Diaminopimelate biosynthesis</keyword>
<keyword id="KW-0457">Lysine biosynthesis</keyword>
<keyword id="KW-0520">NAD</keyword>
<keyword id="KW-0521">NADP</keyword>
<keyword id="KW-0560">Oxidoreductase</keyword>
<keyword id="KW-1185">Reference proteome</keyword>
<reference key="1">
    <citation type="journal article" date="2009" name="Appl. Environ. Microbiol.">
        <title>Complete genome sequence of the chemolithoautotrophic marine magnetotactic coccus strain MC-1.</title>
        <authorList>
            <person name="Schubbe S."/>
            <person name="Williams T.J."/>
            <person name="Xie G."/>
            <person name="Kiss H.E."/>
            <person name="Brettin T.S."/>
            <person name="Martinez D."/>
            <person name="Ross C.A."/>
            <person name="Schuler D."/>
            <person name="Cox B.L."/>
            <person name="Nealson K.H."/>
            <person name="Bazylinski D.A."/>
        </authorList>
    </citation>
    <scope>NUCLEOTIDE SEQUENCE [LARGE SCALE GENOMIC DNA]</scope>
    <source>
        <strain>ATCC BAA-1437 / JCM 17883 / MC-1</strain>
    </source>
</reference>
<accession>A0L4Z4</accession>
<feature type="chain" id="PRO_1000008583" description="4-hydroxy-tetrahydrodipicolinate reductase">
    <location>
        <begin position="1"/>
        <end position="268"/>
    </location>
</feature>
<feature type="active site" description="Proton donor/acceptor" evidence="1">
    <location>
        <position position="156"/>
    </location>
</feature>
<feature type="active site" description="Proton donor" evidence="1">
    <location>
        <position position="160"/>
    </location>
</feature>
<feature type="binding site" evidence="1">
    <location>
        <begin position="9"/>
        <end position="14"/>
    </location>
    <ligand>
        <name>NAD(+)</name>
        <dbReference type="ChEBI" id="CHEBI:57540"/>
    </ligand>
</feature>
<feature type="binding site" evidence="1">
    <location>
        <position position="35"/>
    </location>
    <ligand>
        <name>NAD(+)</name>
        <dbReference type="ChEBI" id="CHEBI:57540"/>
    </ligand>
</feature>
<feature type="binding site" evidence="1">
    <location>
        <begin position="99"/>
        <end position="101"/>
    </location>
    <ligand>
        <name>NAD(+)</name>
        <dbReference type="ChEBI" id="CHEBI:57540"/>
    </ligand>
</feature>
<feature type="binding site" evidence="1">
    <location>
        <begin position="123"/>
        <end position="126"/>
    </location>
    <ligand>
        <name>NAD(+)</name>
        <dbReference type="ChEBI" id="CHEBI:57540"/>
    </ligand>
</feature>
<feature type="binding site" evidence="1">
    <location>
        <position position="157"/>
    </location>
    <ligand>
        <name>(S)-2,3,4,5-tetrahydrodipicolinate</name>
        <dbReference type="ChEBI" id="CHEBI:16845"/>
    </ligand>
</feature>
<feature type="binding site" evidence="1">
    <location>
        <begin position="166"/>
        <end position="167"/>
    </location>
    <ligand>
        <name>(S)-2,3,4,5-tetrahydrodipicolinate</name>
        <dbReference type="ChEBI" id="CHEBI:16845"/>
    </ligand>
</feature>